<accession>A1T7V4</accession>
<evidence type="ECO:0000255" key="1">
    <source>
        <dbReference type="HAMAP-Rule" id="MF_00015"/>
    </source>
</evidence>
<evidence type="ECO:0000256" key="2">
    <source>
        <dbReference type="SAM" id="MobiDB-lite"/>
    </source>
</evidence>
<feature type="chain" id="PRO_0000322749" description="LexA repressor">
    <location>
        <begin position="1"/>
        <end position="232"/>
    </location>
</feature>
<feature type="DNA-binding region" description="H-T-H motif" evidence="1">
    <location>
        <begin position="46"/>
        <end position="66"/>
    </location>
</feature>
<feature type="region of interest" description="Disordered" evidence="2">
    <location>
        <begin position="1"/>
        <end position="25"/>
    </location>
</feature>
<feature type="compositionally biased region" description="Basic and acidic residues" evidence="2">
    <location>
        <begin position="16"/>
        <end position="25"/>
    </location>
</feature>
<feature type="active site" description="For autocatalytic cleavage activity" evidence="1">
    <location>
        <position position="156"/>
    </location>
</feature>
<feature type="active site" description="For autocatalytic cleavage activity" evidence="1">
    <location>
        <position position="193"/>
    </location>
</feature>
<feature type="site" description="Cleavage; by autolysis" evidence="1">
    <location>
        <begin position="121"/>
        <end position="122"/>
    </location>
</feature>
<dbReference type="EC" id="3.4.21.88" evidence="1"/>
<dbReference type="EMBL" id="CP000511">
    <property type="protein sequence ID" value="ABM13254.1"/>
    <property type="molecule type" value="Genomic_DNA"/>
</dbReference>
<dbReference type="RefSeq" id="WP_011779666.1">
    <property type="nucleotide sequence ID" value="NZ_JACKSD010000041.1"/>
</dbReference>
<dbReference type="SMR" id="A1T7V4"/>
<dbReference type="STRING" id="350058.Mvan_2441"/>
<dbReference type="MEROPS" id="S24.001"/>
<dbReference type="KEGG" id="mva:Mvan_2441"/>
<dbReference type="eggNOG" id="COG1974">
    <property type="taxonomic scope" value="Bacteria"/>
</dbReference>
<dbReference type="HOGENOM" id="CLU_066192_45_0_11"/>
<dbReference type="Proteomes" id="UP000009159">
    <property type="component" value="Chromosome"/>
</dbReference>
<dbReference type="GO" id="GO:0003677">
    <property type="term" value="F:DNA binding"/>
    <property type="evidence" value="ECO:0007669"/>
    <property type="project" value="UniProtKB-UniRule"/>
</dbReference>
<dbReference type="GO" id="GO:0004252">
    <property type="term" value="F:serine-type endopeptidase activity"/>
    <property type="evidence" value="ECO:0007669"/>
    <property type="project" value="UniProtKB-UniRule"/>
</dbReference>
<dbReference type="GO" id="GO:0006281">
    <property type="term" value="P:DNA repair"/>
    <property type="evidence" value="ECO:0007669"/>
    <property type="project" value="UniProtKB-UniRule"/>
</dbReference>
<dbReference type="GO" id="GO:0006260">
    <property type="term" value="P:DNA replication"/>
    <property type="evidence" value="ECO:0007669"/>
    <property type="project" value="UniProtKB-UniRule"/>
</dbReference>
<dbReference type="GO" id="GO:0045892">
    <property type="term" value="P:negative regulation of DNA-templated transcription"/>
    <property type="evidence" value="ECO:0007669"/>
    <property type="project" value="UniProtKB-UniRule"/>
</dbReference>
<dbReference type="GO" id="GO:0006508">
    <property type="term" value="P:proteolysis"/>
    <property type="evidence" value="ECO:0007669"/>
    <property type="project" value="InterPro"/>
</dbReference>
<dbReference type="GO" id="GO:0009432">
    <property type="term" value="P:SOS response"/>
    <property type="evidence" value="ECO:0007669"/>
    <property type="project" value="UniProtKB-UniRule"/>
</dbReference>
<dbReference type="CDD" id="cd06529">
    <property type="entry name" value="S24_LexA-like"/>
    <property type="match status" value="1"/>
</dbReference>
<dbReference type="FunFam" id="1.10.10.10:FF:000009">
    <property type="entry name" value="LexA repressor"/>
    <property type="match status" value="1"/>
</dbReference>
<dbReference type="FunFam" id="2.10.109.10:FF:000001">
    <property type="entry name" value="LexA repressor"/>
    <property type="match status" value="1"/>
</dbReference>
<dbReference type="Gene3D" id="2.10.109.10">
    <property type="entry name" value="Umud Fragment, subunit A"/>
    <property type="match status" value="1"/>
</dbReference>
<dbReference type="Gene3D" id="1.10.10.10">
    <property type="entry name" value="Winged helix-like DNA-binding domain superfamily/Winged helix DNA-binding domain"/>
    <property type="match status" value="1"/>
</dbReference>
<dbReference type="HAMAP" id="MF_00015">
    <property type="entry name" value="LexA"/>
    <property type="match status" value="1"/>
</dbReference>
<dbReference type="InterPro" id="IPR006200">
    <property type="entry name" value="LexA"/>
</dbReference>
<dbReference type="InterPro" id="IPR039418">
    <property type="entry name" value="LexA-like"/>
</dbReference>
<dbReference type="InterPro" id="IPR036286">
    <property type="entry name" value="LexA/Signal_pep-like_sf"/>
</dbReference>
<dbReference type="InterPro" id="IPR006199">
    <property type="entry name" value="LexA_DNA-bd_dom"/>
</dbReference>
<dbReference type="InterPro" id="IPR050077">
    <property type="entry name" value="LexA_repressor"/>
</dbReference>
<dbReference type="InterPro" id="IPR006197">
    <property type="entry name" value="Peptidase_S24_LexA"/>
</dbReference>
<dbReference type="InterPro" id="IPR015927">
    <property type="entry name" value="Peptidase_S24_S26A/B/C"/>
</dbReference>
<dbReference type="InterPro" id="IPR036388">
    <property type="entry name" value="WH-like_DNA-bd_sf"/>
</dbReference>
<dbReference type="InterPro" id="IPR036390">
    <property type="entry name" value="WH_DNA-bd_sf"/>
</dbReference>
<dbReference type="NCBIfam" id="TIGR00498">
    <property type="entry name" value="lexA"/>
    <property type="match status" value="1"/>
</dbReference>
<dbReference type="PANTHER" id="PTHR33516">
    <property type="entry name" value="LEXA REPRESSOR"/>
    <property type="match status" value="1"/>
</dbReference>
<dbReference type="PANTHER" id="PTHR33516:SF2">
    <property type="entry name" value="LEXA REPRESSOR-RELATED"/>
    <property type="match status" value="1"/>
</dbReference>
<dbReference type="Pfam" id="PF01726">
    <property type="entry name" value="LexA_DNA_bind"/>
    <property type="match status" value="1"/>
</dbReference>
<dbReference type="Pfam" id="PF00717">
    <property type="entry name" value="Peptidase_S24"/>
    <property type="match status" value="1"/>
</dbReference>
<dbReference type="PRINTS" id="PR00726">
    <property type="entry name" value="LEXASERPTASE"/>
</dbReference>
<dbReference type="SUPFAM" id="SSF51306">
    <property type="entry name" value="LexA/Signal peptidase"/>
    <property type="match status" value="1"/>
</dbReference>
<dbReference type="SUPFAM" id="SSF46785">
    <property type="entry name" value="Winged helix' DNA-binding domain"/>
    <property type="match status" value="1"/>
</dbReference>
<keyword id="KW-0068">Autocatalytic cleavage</keyword>
<keyword id="KW-0227">DNA damage</keyword>
<keyword id="KW-0234">DNA repair</keyword>
<keyword id="KW-0235">DNA replication</keyword>
<keyword id="KW-0238">DNA-binding</keyword>
<keyword id="KW-0378">Hydrolase</keyword>
<keyword id="KW-0678">Repressor</keyword>
<keyword id="KW-0742">SOS response</keyword>
<keyword id="KW-0804">Transcription</keyword>
<keyword id="KW-0805">Transcription regulation</keyword>
<gene>
    <name evidence="1" type="primary">lexA</name>
    <name type="ordered locus">Mvan_2441</name>
</gene>
<comment type="function">
    <text evidence="1">Represses a number of genes involved in the response to DNA damage (SOS response), including recA and lexA. In the presence of single-stranded DNA, RecA interacts with LexA causing an autocatalytic cleavage which disrupts the DNA-binding part of LexA, leading to derepression of the SOS regulon and eventually DNA repair.</text>
</comment>
<comment type="catalytic activity">
    <reaction evidence="1">
        <text>Hydrolysis of Ala-|-Gly bond in repressor LexA.</text>
        <dbReference type="EC" id="3.4.21.88"/>
    </reaction>
</comment>
<comment type="subunit">
    <text evidence="1">Homodimer.</text>
</comment>
<comment type="similarity">
    <text evidence="1">Belongs to the peptidase S24 family.</text>
</comment>
<sequence length="232" mass="24579">MSDDSSDSTSGAGSGRGRDSGLTERQRTILDVIRASVTSRGYPPSIREIGDAVGLTSTSSVAHQLRTLERKGYLRRDPNRPRAVDVRGSDDHAAPIVATDVAGSDSLPEPTFVPVLGRIAAGGPILAEEAVEDVFPLPRELVGEGSLFLLKVVGESMIDAAICDGDWVVVRQQSVADNGDIVAAMIDGEATVKTFKRTKGQVWLMPHNPAFDPIPGNDAAILGKVVTVIRKI</sequence>
<name>LEXA_MYCVP</name>
<proteinExistence type="inferred from homology"/>
<reference key="1">
    <citation type="submission" date="2006-12" db="EMBL/GenBank/DDBJ databases">
        <title>Complete sequence of Mycobacterium vanbaalenii PYR-1.</title>
        <authorList>
            <consortium name="US DOE Joint Genome Institute"/>
            <person name="Copeland A."/>
            <person name="Lucas S."/>
            <person name="Lapidus A."/>
            <person name="Barry K."/>
            <person name="Detter J.C."/>
            <person name="Glavina del Rio T."/>
            <person name="Hammon N."/>
            <person name="Israni S."/>
            <person name="Dalin E."/>
            <person name="Tice H."/>
            <person name="Pitluck S."/>
            <person name="Singan V."/>
            <person name="Schmutz J."/>
            <person name="Larimer F."/>
            <person name="Land M."/>
            <person name="Hauser L."/>
            <person name="Kyrpides N."/>
            <person name="Anderson I.J."/>
            <person name="Miller C."/>
            <person name="Richardson P."/>
        </authorList>
    </citation>
    <scope>NUCLEOTIDE SEQUENCE [LARGE SCALE GENOMIC DNA]</scope>
    <source>
        <strain>DSM 7251 / JCM 13017 / BCRC 16820 / KCTC 9966 / NRRL B-24157 / PYR-1</strain>
    </source>
</reference>
<protein>
    <recommendedName>
        <fullName evidence="1">LexA repressor</fullName>
        <ecNumber evidence="1">3.4.21.88</ecNumber>
    </recommendedName>
</protein>
<organism>
    <name type="scientific">Mycolicibacterium vanbaalenii (strain DSM 7251 / JCM 13017 / BCRC 16820 / KCTC 9966 / NRRL B-24157 / PYR-1)</name>
    <name type="common">Mycobacterium vanbaalenii</name>
    <dbReference type="NCBI Taxonomy" id="350058"/>
    <lineage>
        <taxon>Bacteria</taxon>
        <taxon>Bacillati</taxon>
        <taxon>Actinomycetota</taxon>
        <taxon>Actinomycetes</taxon>
        <taxon>Mycobacteriales</taxon>
        <taxon>Mycobacteriaceae</taxon>
        <taxon>Mycolicibacterium</taxon>
    </lineage>
</organism>